<organism>
    <name type="scientific">Streptococcus pyogenes serotype M18 (strain MGAS8232)</name>
    <dbReference type="NCBI Taxonomy" id="186103"/>
    <lineage>
        <taxon>Bacteria</taxon>
        <taxon>Bacillati</taxon>
        <taxon>Bacillota</taxon>
        <taxon>Bacilli</taxon>
        <taxon>Lactobacillales</taxon>
        <taxon>Streptococcaceae</taxon>
        <taxon>Streptococcus</taxon>
    </lineage>
</organism>
<evidence type="ECO:0000255" key="1">
    <source>
        <dbReference type="HAMAP-Rule" id="MF_01321"/>
    </source>
</evidence>
<protein>
    <recommendedName>
        <fullName evidence="1">DNA-directed RNA polymerase subunit beta</fullName>
        <shortName evidence="1">RNAP subunit beta</shortName>
        <ecNumber evidence="1">2.7.7.6</ecNumber>
    </recommendedName>
    <alternativeName>
        <fullName evidence="1">RNA polymerase subunit beta</fullName>
    </alternativeName>
    <alternativeName>
        <fullName evidence="1">Transcriptase subunit beta</fullName>
    </alternativeName>
</protein>
<sequence length="1188" mass="132800">MAGHEVRYGKHRTRRSFSRIKEVLDLPNLIEIQTDSFQDFLDSGLKEVFEDVLPISNFTDTMELEFVGYEFKEPKYTLEEARIHDASYSAPIFVTFRLVNKETGEIKTQEVFFGDFPIMTEMGTFIINGGERIIVSQLVRSPGVYFNDKVDKNGKVGYGSTVIPNRGAWLELETDSKDIAYTRIDRTRKIPFTTLVRALGFSGDDEIVDIFGESDLVRNTIEKDIHKNPSDSRTDEALKEIYERLRPGEPKTADSSRSLLIARFFDARRYDLAAVGRYKVNKKLNIKTRLLNQIIAENLVDAETGEILVEAGTEMTRSVIESIEEHLDGDLNKFVYTPNDYAVVTEPVVLQKFKVVSPIDPDRVVTIVGNANPDDKVRALTPADILAEMSYFLNLAEGLGKVDDIDHLGNRRIRAVGELLANQFRIGLARMERNVRERMSVQDNDVLTPQQIINIRPVTAAVKEFFGSSQLSQFMDQHNPLSELSHKRRLSALGPGGLTRDRAGYEVRDVHYTHYGRMCPIETPEGPNIGLINNLSSFGHLNKYGFIQTPYRKVDRATGTVTNEIVWLTADEEDEYTVAQANSKLNEDGTFAEEIVMGRHQGNNQEFSASVVDFVDVSPKQVVAVATACIPFLENDDSNRALMGANMQRQAVPLIDPKAPYVGTGMEYQAAHDSGAAVIAQHNGKVVFSDAEKVEIRRQDGSLDVYHITKFRRSNSGTAYNQRTLVKVGDIVEKGDFIADGPSMENGEMALGQNPVVAYMTWEGYNFEDAVIMSERLVKEDVYTSVHLEEFESETRDTKLGPEEITREIPNVGEEALKDLDEMGIIRIGAEVKEGDILVGKVTPKGEKDLSAEERLLHAIFGDKSREVRDTSLRVPHGGDGIVRDVKIFTRANGDELQSGVNMLVRVYIAQKRKIKVGDKMAGRHGNKGVVSRIVPVEDMPYLPDGTPVDIMLNPLGVPSRMNIGQVMELHLGMAARNLGIHIATPVFDGASSEDLWDTVREAGMDSDAKTVLYDGRTGEPFDNRVSVGVMYMIKLHHMVDDKLHARSVGPYSLVTQQPLGGKAQFGGQRFGEMEVWALEAYGASNVLQEILTYKSDDVTGRLKAYEAITKGKPIPKPGVPESFRVLVKELQSLGLDMRVLDEDDNEVELRDLDEGEDDDIMHVDDLEKAREKQAQETQEVSETTDEK</sequence>
<name>RPOB_STRP8</name>
<feature type="chain" id="PRO_0000047979" description="DNA-directed RNA polymerase subunit beta">
    <location>
        <begin position="1"/>
        <end position="1188"/>
    </location>
</feature>
<proteinExistence type="inferred from homology"/>
<comment type="function">
    <text evidence="1">DNA-dependent RNA polymerase catalyzes the transcription of DNA into RNA using the four ribonucleoside triphosphates as substrates.</text>
</comment>
<comment type="catalytic activity">
    <reaction evidence="1">
        <text>RNA(n) + a ribonucleoside 5'-triphosphate = RNA(n+1) + diphosphate</text>
        <dbReference type="Rhea" id="RHEA:21248"/>
        <dbReference type="Rhea" id="RHEA-COMP:14527"/>
        <dbReference type="Rhea" id="RHEA-COMP:17342"/>
        <dbReference type="ChEBI" id="CHEBI:33019"/>
        <dbReference type="ChEBI" id="CHEBI:61557"/>
        <dbReference type="ChEBI" id="CHEBI:140395"/>
        <dbReference type="EC" id="2.7.7.6"/>
    </reaction>
</comment>
<comment type="subunit">
    <text evidence="1">The RNAP catalytic core consists of 2 alpha, 1 beta, 1 beta' and 1 omega subunit. When a sigma factor is associated with the core the holoenzyme is formed, which can initiate transcription.</text>
</comment>
<comment type="similarity">
    <text evidence="1">Belongs to the RNA polymerase beta chain family.</text>
</comment>
<gene>
    <name evidence="1" type="primary">rpoB</name>
    <name type="synonym">ropB</name>
    <name type="ordered locus">spyM18_0099</name>
</gene>
<keyword id="KW-0240">DNA-directed RNA polymerase</keyword>
<keyword id="KW-0548">Nucleotidyltransferase</keyword>
<keyword id="KW-0804">Transcription</keyword>
<keyword id="KW-0808">Transferase</keyword>
<dbReference type="EC" id="2.7.7.6" evidence="1"/>
<dbReference type="EMBL" id="AE009949">
    <property type="protein sequence ID" value="AAL96912.1"/>
    <property type="molecule type" value="Genomic_DNA"/>
</dbReference>
<dbReference type="RefSeq" id="WP_002993467.1">
    <property type="nucleotide sequence ID" value="NC_003485.1"/>
</dbReference>
<dbReference type="SMR" id="Q8P2Y3"/>
<dbReference type="GeneID" id="69900076"/>
<dbReference type="KEGG" id="spm:spyM18_0099"/>
<dbReference type="HOGENOM" id="CLU_000524_4_1_9"/>
<dbReference type="GO" id="GO:0000428">
    <property type="term" value="C:DNA-directed RNA polymerase complex"/>
    <property type="evidence" value="ECO:0007669"/>
    <property type="project" value="UniProtKB-KW"/>
</dbReference>
<dbReference type="GO" id="GO:0003677">
    <property type="term" value="F:DNA binding"/>
    <property type="evidence" value="ECO:0007669"/>
    <property type="project" value="UniProtKB-UniRule"/>
</dbReference>
<dbReference type="GO" id="GO:0003899">
    <property type="term" value="F:DNA-directed RNA polymerase activity"/>
    <property type="evidence" value="ECO:0007669"/>
    <property type="project" value="UniProtKB-UniRule"/>
</dbReference>
<dbReference type="GO" id="GO:0032549">
    <property type="term" value="F:ribonucleoside binding"/>
    <property type="evidence" value="ECO:0007669"/>
    <property type="project" value="InterPro"/>
</dbReference>
<dbReference type="GO" id="GO:0006351">
    <property type="term" value="P:DNA-templated transcription"/>
    <property type="evidence" value="ECO:0007669"/>
    <property type="project" value="UniProtKB-UniRule"/>
</dbReference>
<dbReference type="CDD" id="cd00653">
    <property type="entry name" value="RNA_pol_B_RPB2"/>
    <property type="match status" value="1"/>
</dbReference>
<dbReference type="Gene3D" id="2.40.50.100">
    <property type="match status" value="1"/>
</dbReference>
<dbReference type="Gene3D" id="2.40.50.150">
    <property type="match status" value="1"/>
</dbReference>
<dbReference type="Gene3D" id="3.90.1100.10">
    <property type="match status" value="2"/>
</dbReference>
<dbReference type="Gene3D" id="2.30.150.10">
    <property type="entry name" value="DNA-directed RNA polymerase, beta subunit, external 1 domain"/>
    <property type="match status" value="1"/>
</dbReference>
<dbReference type="Gene3D" id="2.40.270.10">
    <property type="entry name" value="DNA-directed RNA polymerase, subunit 2, domain 6"/>
    <property type="match status" value="2"/>
</dbReference>
<dbReference type="Gene3D" id="3.90.1800.10">
    <property type="entry name" value="RNA polymerase alpha subunit dimerisation domain"/>
    <property type="match status" value="1"/>
</dbReference>
<dbReference type="Gene3D" id="3.90.1110.10">
    <property type="entry name" value="RNA polymerase Rpb2, domain 2"/>
    <property type="match status" value="2"/>
</dbReference>
<dbReference type="HAMAP" id="MF_01321">
    <property type="entry name" value="RNApol_bact_RpoB"/>
    <property type="match status" value="1"/>
</dbReference>
<dbReference type="InterPro" id="IPR042107">
    <property type="entry name" value="DNA-dir_RNA_pol_bsu_ext_1_sf"/>
</dbReference>
<dbReference type="InterPro" id="IPR019462">
    <property type="entry name" value="DNA-dir_RNA_pol_bsu_external_1"/>
</dbReference>
<dbReference type="InterPro" id="IPR015712">
    <property type="entry name" value="DNA-dir_RNA_pol_su2"/>
</dbReference>
<dbReference type="InterPro" id="IPR007120">
    <property type="entry name" value="DNA-dir_RNAP_su2_dom"/>
</dbReference>
<dbReference type="InterPro" id="IPR037033">
    <property type="entry name" value="DNA-dir_RNAP_su2_hyb_sf"/>
</dbReference>
<dbReference type="InterPro" id="IPR010243">
    <property type="entry name" value="RNA_pol_bsu_bac"/>
</dbReference>
<dbReference type="InterPro" id="IPR007121">
    <property type="entry name" value="RNA_pol_bsu_CS"/>
</dbReference>
<dbReference type="InterPro" id="IPR007644">
    <property type="entry name" value="RNA_pol_bsu_protrusion"/>
</dbReference>
<dbReference type="InterPro" id="IPR007642">
    <property type="entry name" value="RNA_pol_Rpb2_2"/>
</dbReference>
<dbReference type="InterPro" id="IPR037034">
    <property type="entry name" value="RNA_pol_Rpb2_2_sf"/>
</dbReference>
<dbReference type="InterPro" id="IPR007645">
    <property type="entry name" value="RNA_pol_Rpb2_3"/>
</dbReference>
<dbReference type="InterPro" id="IPR007641">
    <property type="entry name" value="RNA_pol_Rpb2_7"/>
</dbReference>
<dbReference type="InterPro" id="IPR014724">
    <property type="entry name" value="RNA_pol_RPB2_OB-fold"/>
</dbReference>
<dbReference type="NCBIfam" id="NF001616">
    <property type="entry name" value="PRK00405.1"/>
    <property type="match status" value="1"/>
</dbReference>
<dbReference type="NCBIfam" id="TIGR02013">
    <property type="entry name" value="rpoB"/>
    <property type="match status" value="1"/>
</dbReference>
<dbReference type="PANTHER" id="PTHR20856">
    <property type="entry name" value="DNA-DIRECTED RNA POLYMERASE I SUBUNIT 2"/>
    <property type="match status" value="1"/>
</dbReference>
<dbReference type="Pfam" id="PF04563">
    <property type="entry name" value="RNA_pol_Rpb2_1"/>
    <property type="match status" value="1"/>
</dbReference>
<dbReference type="Pfam" id="PF04561">
    <property type="entry name" value="RNA_pol_Rpb2_2"/>
    <property type="match status" value="2"/>
</dbReference>
<dbReference type="Pfam" id="PF04565">
    <property type="entry name" value="RNA_pol_Rpb2_3"/>
    <property type="match status" value="1"/>
</dbReference>
<dbReference type="Pfam" id="PF10385">
    <property type="entry name" value="RNA_pol_Rpb2_45"/>
    <property type="match status" value="1"/>
</dbReference>
<dbReference type="Pfam" id="PF00562">
    <property type="entry name" value="RNA_pol_Rpb2_6"/>
    <property type="match status" value="1"/>
</dbReference>
<dbReference type="Pfam" id="PF04560">
    <property type="entry name" value="RNA_pol_Rpb2_7"/>
    <property type="match status" value="1"/>
</dbReference>
<dbReference type="SUPFAM" id="SSF64484">
    <property type="entry name" value="beta and beta-prime subunits of DNA dependent RNA-polymerase"/>
    <property type="match status" value="1"/>
</dbReference>
<dbReference type="PROSITE" id="PS01166">
    <property type="entry name" value="RNA_POL_BETA"/>
    <property type="match status" value="1"/>
</dbReference>
<reference key="1">
    <citation type="journal article" date="2002" name="Proc. Natl. Acad. Sci. U.S.A.">
        <title>Genome sequence and comparative microarray analysis of serotype M18 group A Streptococcus strains associated with acute rheumatic fever outbreaks.</title>
        <authorList>
            <person name="Smoot J.C."/>
            <person name="Barbian K.D."/>
            <person name="Van Gompel J.J."/>
            <person name="Smoot L.M."/>
            <person name="Chaussee M.S."/>
            <person name="Sylva G.L."/>
            <person name="Sturdevant D.E."/>
            <person name="Ricklefs S.M."/>
            <person name="Porcella S.F."/>
            <person name="Parkins L.D."/>
            <person name="Beres S.B."/>
            <person name="Campbell D.S."/>
            <person name="Smith T.M."/>
            <person name="Zhang Q."/>
            <person name="Kapur V."/>
            <person name="Daly J.A."/>
            <person name="Veasy L.G."/>
            <person name="Musser J.M."/>
        </authorList>
    </citation>
    <scope>NUCLEOTIDE SEQUENCE [LARGE SCALE GENOMIC DNA]</scope>
    <source>
        <strain>MGAS8232</strain>
    </source>
</reference>
<accession>Q8P2Y3</accession>